<evidence type="ECO:0000255" key="1">
    <source>
        <dbReference type="HAMAP-Rule" id="MF_00050"/>
    </source>
</evidence>
<reference key="1">
    <citation type="submission" date="2007-10" db="EMBL/GenBank/DDBJ databases">
        <title>Complete sequence of Desulfococcus oleovorans Hxd3.</title>
        <authorList>
            <consortium name="US DOE Joint Genome Institute"/>
            <person name="Copeland A."/>
            <person name="Lucas S."/>
            <person name="Lapidus A."/>
            <person name="Barry K."/>
            <person name="Glavina del Rio T."/>
            <person name="Dalin E."/>
            <person name="Tice H."/>
            <person name="Pitluck S."/>
            <person name="Kiss H."/>
            <person name="Brettin T."/>
            <person name="Bruce D."/>
            <person name="Detter J.C."/>
            <person name="Han C."/>
            <person name="Schmutz J."/>
            <person name="Larimer F."/>
            <person name="Land M."/>
            <person name="Hauser L."/>
            <person name="Kyrpides N."/>
            <person name="Kim E."/>
            <person name="Wawrik B."/>
            <person name="Richardson P."/>
        </authorList>
    </citation>
    <scope>NUCLEOTIDE SEQUENCE [LARGE SCALE GENOMIC DNA]</scope>
    <source>
        <strain>DSM 6200 / JCM 39069 / Hxd3</strain>
    </source>
</reference>
<dbReference type="EMBL" id="CP000859">
    <property type="protein sequence ID" value="ABW66285.1"/>
    <property type="molecule type" value="Genomic_DNA"/>
</dbReference>
<dbReference type="RefSeq" id="WP_012173904.1">
    <property type="nucleotide sequence ID" value="NC_009943.1"/>
</dbReference>
<dbReference type="SMR" id="A8ZTM1"/>
<dbReference type="STRING" id="96561.Dole_0475"/>
<dbReference type="KEGG" id="dol:Dole_0475"/>
<dbReference type="eggNOG" id="COG0264">
    <property type="taxonomic scope" value="Bacteria"/>
</dbReference>
<dbReference type="HOGENOM" id="CLU_047155_1_1_7"/>
<dbReference type="OrthoDB" id="9808348at2"/>
<dbReference type="Proteomes" id="UP000008561">
    <property type="component" value="Chromosome"/>
</dbReference>
<dbReference type="GO" id="GO:0005737">
    <property type="term" value="C:cytoplasm"/>
    <property type="evidence" value="ECO:0007669"/>
    <property type="project" value="UniProtKB-SubCell"/>
</dbReference>
<dbReference type="GO" id="GO:0003746">
    <property type="term" value="F:translation elongation factor activity"/>
    <property type="evidence" value="ECO:0007669"/>
    <property type="project" value="UniProtKB-UniRule"/>
</dbReference>
<dbReference type="CDD" id="cd14275">
    <property type="entry name" value="UBA_EF-Ts"/>
    <property type="match status" value="1"/>
</dbReference>
<dbReference type="FunFam" id="1.10.286.20:FF:000001">
    <property type="entry name" value="Elongation factor Ts"/>
    <property type="match status" value="1"/>
</dbReference>
<dbReference type="FunFam" id="1.10.8.10:FF:000001">
    <property type="entry name" value="Elongation factor Ts"/>
    <property type="match status" value="1"/>
</dbReference>
<dbReference type="Gene3D" id="1.10.286.20">
    <property type="match status" value="1"/>
</dbReference>
<dbReference type="Gene3D" id="1.10.8.10">
    <property type="entry name" value="DNA helicase RuvA subunit, C-terminal domain"/>
    <property type="match status" value="1"/>
</dbReference>
<dbReference type="Gene3D" id="3.30.479.20">
    <property type="entry name" value="Elongation factor Ts, dimerisation domain"/>
    <property type="match status" value="1"/>
</dbReference>
<dbReference type="HAMAP" id="MF_00050">
    <property type="entry name" value="EF_Ts"/>
    <property type="match status" value="1"/>
</dbReference>
<dbReference type="InterPro" id="IPR036402">
    <property type="entry name" value="EF-Ts_dimer_sf"/>
</dbReference>
<dbReference type="InterPro" id="IPR001816">
    <property type="entry name" value="Transl_elong_EFTs/EF1B"/>
</dbReference>
<dbReference type="InterPro" id="IPR014039">
    <property type="entry name" value="Transl_elong_EFTs/EF1B_dimer"/>
</dbReference>
<dbReference type="InterPro" id="IPR018101">
    <property type="entry name" value="Transl_elong_Ts_CS"/>
</dbReference>
<dbReference type="InterPro" id="IPR009060">
    <property type="entry name" value="UBA-like_sf"/>
</dbReference>
<dbReference type="NCBIfam" id="TIGR00116">
    <property type="entry name" value="tsf"/>
    <property type="match status" value="1"/>
</dbReference>
<dbReference type="PANTHER" id="PTHR11741">
    <property type="entry name" value="ELONGATION FACTOR TS"/>
    <property type="match status" value="1"/>
</dbReference>
<dbReference type="PANTHER" id="PTHR11741:SF0">
    <property type="entry name" value="ELONGATION FACTOR TS, MITOCHONDRIAL"/>
    <property type="match status" value="1"/>
</dbReference>
<dbReference type="Pfam" id="PF00889">
    <property type="entry name" value="EF_TS"/>
    <property type="match status" value="1"/>
</dbReference>
<dbReference type="SUPFAM" id="SSF54713">
    <property type="entry name" value="Elongation factor Ts (EF-Ts), dimerisation domain"/>
    <property type="match status" value="1"/>
</dbReference>
<dbReference type="SUPFAM" id="SSF46934">
    <property type="entry name" value="UBA-like"/>
    <property type="match status" value="1"/>
</dbReference>
<dbReference type="PROSITE" id="PS01126">
    <property type="entry name" value="EF_TS_1"/>
    <property type="match status" value="1"/>
</dbReference>
<comment type="function">
    <text evidence="1">Associates with the EF-Tu.GDP complex and induces the exchange of GDP to GTP. It remains bound to the aminoacyl-tRNA.EF-Tu.GTP complex up to the GTP hydrolysis stage on the ribosome.</text>
</comment>
<comment type="subcellular location">
    <subcellularLocation>
        <location evidence="1">Cytoplasm</location>
    </subcellularLocation>
</comment>
<comment type="similarity">
    <text evidence="1">Belongs to the EF-Ts family.</text>
</comment>
<accession>A8ZTM1</accession>
<name>EFTS_DESOH</name>
<keyword id="KW-0963">Cytoplasm</keyword>
<keyword id="KW-0251">Elongation factor</keyword>
<keyword id="KW-0648">Protein biosynthesis</keyword>
<keyword id="KW-1185">Reference proteome</keyword>
<organism>
    <name type="scientific">Desulfosudis oleivorans (strain DSM 6200 / JCM 39069 / Hxd3)</name>
    <name type="common">Desulfococcus oleovorans</name>
    <dbReference type="NCBI Taxonomy" id="96561"/>
    <lineage>
        <taxon>Bacteria</taxon>
        <taxon>Pseudomonadati</taxon>
        <taxon>Thermodesulfobacteriota</taxon>
        <taxon>Desulfobacteria</taxon>
        <taxon>Desulfobacterales</taxon>
        <taxon>Desulfosudaceae</taxon>
        <taxon>Desulfosudis</taxon>
    </lineage>
</organism>
<gene>
    <name evidence="1" type="primary">tsf</name>
    <name type="ordered locus">Dole_0475</name>
</gene>
<sequence>MGTISASLVKELREKTGAGMMDCKEALTACDGDIEKAVDFLRQKGLAKAAKRSGRETSEGIVESYIHMGGKIGVMVEVNCESDFVAKTDDFKEFARNVAMQIAATNPAGIAPEDVPADLLERERQVYRAQVLEMGKPENMVDKIVDGKIKKFFKESCLIEQQYVKNPDITIGDYLNETVAKIGESIRIKRFARFALGE</sequence>
<protein>
    <recommendedName>
        <fullName evidence="1">Elongation factor Ts</fullName>
        <shortName evidence="1">EF-Ts</shortName>
    </recommendedName>
</protein>
<proteinExistence type="inferred from homology"/>
<feature type="chain" id="PRO_1000117577" description="Elongation factor Ts">
    <location>
        <begin position="1"/>
        <end position="198"/>
    </location>
</feature>
<feature type="region of interest" description="Involved in Mg(2+) ion dislocation from EF-Tu" evidence="1">
    <location>
        <begin position="82"/>
        <end position="85"/>
    </location>
</feature>